<name>THII_MACCJ</name>
<accession>B9E7C5</accession>
<gene>
    <name evidence="1" type="primary">thiI</name>
    <name type="ordered locus">MCCL_1386</name>
</gene>
<comment type="function">
    <text evidence="1">Catalyzes the ATP-dependent transfer of a sulfur to tRNA to produce 4-thiouridine in position 8 of tRNAs, which functions as a near-UV photosensor. Also catalyzes the transfer of sulfur to the sulfur carrier protein ThiS, forming ThiS-thiocarboxylate. This is a step in the synthesis of thiazole, in the thiamine biosynthesis pathway. The sulfur is donated as persulfide by IscS.</text>
</comment>
<comment type="catalytic activity">
    <reaction evidence="1">
        <text>[ThiI sulfur-carrier protein]-S-sulfanyl-L-cysteine + a uridine in tRNA + 2 reduced [2Fe-2S]-[ferredoxin] + ATP + H(+) = [ThiI sulfur-carrier protein]-L-cysteine + a 4-thiouridine in tRNA + 2 oxidized [2Fe-2S]-[ferredoxin] + AMP + diphosphate</text>
        <dbReference type="Rhea" id="RHEA:24176"/>
        <dbReference type="Rhea" id="RHEA-COMP:10000"/>
        <dbReference type="Rhea" id="RHEA-COMP:10001"/>
        <dbReference type="Rhea" id="RHEA-COMP:13337"/>
        <dbReference type="Rhea" id="RHEA-COMP:13338"/>
        <dbReference type="Rhea" id="RHEA-COMP:13339"/>
        <dbReference type="Rhea" id="RHEA-COMP:13340"/>
        <dbReference type="ChEBI" id="CHEBI:15378"/>
        <dbReference type="ChEBI" id="CHEBI:29950"/>
        <dbReference type="ChEBI" id="CHEBI:30616"/>
        <dbReference type="ChEBI" id="CHEBI:33019"/>
        <dbReference type="ChEBI" id="CHEBI:33737"/>
        <dbReference type="ChEBI" id="CHEBI:33738"/>
        <dbReference type="ChEBI" id="CHEBI:61963"/>
        <dbReference type="ChEBI" id="CHEBI:65315"/>
        <dbReference type="ChEBI" id="CHEBI:136798"/>
        <dbReference type="ChEBI" id="CHEBI:456215"/>
        <dbReference type="EC" id="2.8.1.4"/>
    </reaction>
</comment>
<comment type="catalytic activity">
    <reaction evidence="1">
        <text>[ThiS sulfur-carrier protein]-C-terminal Gly-Gly-AMP + S-sulfanyl-L-cysteinyl-[cysteine desulfurase] + AH2 = [ThiS sulfur-carrier protein]-C-terminal-Gly-aminoethanethioate + L-cysteinyl-[cysteine desulfurase] + A + AMP + 2 H(+)</text>
        <dbReference type="Rhea" id="RHEA:43340"/>
        <dbReference type="Rhea" id="RHEA-COMP:12157"/>
        <dbReference type="Rhea" id="RHEA-COMP:12158"/>
        <dbReference type="Rhea" id="RHEA-COMP:12910"/>
        <dbReference type="Rhea" id="RHEA-COMP:19908"/>
        <dbReference type="ChEBI" id="CHEBI:13193"/>
        <dbReference type="ChEBI" id="CHEBI:15378"/>
        <dbReference type="ChEBI" id="CHEBI:17499"/>
        <dbReference type="ChEBI" id="CHEBI:29950"/>
        <dbReference type="ChEBI" id="CHEBI:61963"/>
        <dbReference type="ChEBI" id="CHEBI:90618"/>
        <dbReference type="ChEBI" id="CHEBI:232372"/>
        <dbReference type="ChEBI" id="CHEBI:456215"/>
    </reaction>
</comment>
<comment type="pathway">
    <text evidence="1">Cofactor biosynthesis; thiamine diphosphate biosynthesis.</text>
</comment>
<comment type="subcellular location">
    <subcellularLocation>
        <location evidence="1">Cytoplasm</location>
    </subcellularLocation>
</comment>
<comment type="similarity">
    <text evidence="1">Belongs to the ThiI family.</text>
</comment>
<keyword id="KW-0067">ATP-binding</keyword>
<keyword id="KW-0963">Cytoplasm</keyword>
<keyword id="KW-0547">Nucleotide-binding</keyword>
<keyword id="KW-1185">Reference proteome</keyword>
<keyword id="KW-0694">RNA-binding</keyword>
<keyword id="KW-0784">Thiamine biosynthesis</keyword>
<keyword id="KW-0808">Transferase</keyword>
<keyword id="KW-0820">tRNA-binding</keyword>
<organism>
    <name type="scientific">Macrococcus caseolyticus (strain JCSC5402)</name>
    <name type="common">Macrococcoides caseolyticum</name>
    <dbReference type="NCBI Taxonomy" id="458233"/>
    <lineage>
        <taxon>Bacteria</taxon>
        <taxon>Bacillati</taxon>
        <taxon>Bacillota</taxon>
        <taxon>Bacilli</taxon>
        <taxon>Bacillales</taxon>
        <taxon>Staphylococcaceae</taxon>
        <taxon>Macrococcoides</taxon>
    </lineage>
</organism>
<proteinExistence type="inferred from homology"/>
<dbReference type="EC" id="2.8.1.4" evidence="1"/>
<dbReference type="EMBL" id="AP009484">
    <property type="protein sequence ID" value="BAH18093.1"/>
    <property type="molecule type" value="Genomic_DNA"/>
</dbReference>
<dbReference type="RefSeq" id="WP_012657291.1">
    <property type="nucleotide sequence ID" value="NC_011999.1"/>
</dbReference>
<dbReference type="SMR" id="B9E7C5"/>
<dbReference type="STRING" id="458233.MCCL_1386"/>
<dbReference type="KEGG" id="mcl:MCCL_1386"/>
<dbReference type="eggNOG" id="COG0301">
    <property type="taxonomic scope" value="Bacteria"/>
</dbReference>
<dbReference type="HOGENOM" id="CLU_037952_4_0_9"/>
<dbReference type="OrthoDB" id="9773948at2"/>
<dbReference type="UniPathway" id="UPA00060"/>
<dbReference type="Proteomes" id="UP000001383">
    <property type="component" value="Chromosome"/>
</dbReference>
<dbReference type="GO" id="GO:0005829">
    <property type="term" value="C:cytosol"/>
    <property type="evidence" value="ECO:0007669"/>
    <property type="project" value="TreeGrafter"/>
</dbReference>
<dbReference type="GO" id="GO:0005524">
    <property type="term" value="F:ATP binding"/>
    <property type="evidence" value="ECO:0007669"/>
    <property type="project" value="UniProtKB-UniRule"/>
</dbReference>
<dbReference type="GO" id="GO:0004810">
    <property type="term" value="F:CCA tRNA nucleotidyltransferase activity"/>
    <property type="evidence" value="ECO:0007669"/>
    <property type="project" value="InterPro"/>
</dbReference>
<dbReference type="GO" id="GO:0000049">
    <property type="term" value="F:tRNA binding"/>
    <property type="evidence" value="ECO:0007669"/>
    <property type="project" value="UniProtKB-UniRule"/>
</dbReference>
<dbReference type="GO" id="GO:0140741">
    <property type="term" value="F:tRNA-uracil-4 sulfurtransferase activity"/>
    <property type="evidence" value="ECO:0007669"/>
    <property type="project" value="UniProtKB-EC"/>
</dbReference>
<dbReference type="GO" id="GO:0009228">
    <property type="term" value="P:thiamine biosynthetic process"/>
    <property type="evidence" value="ECO:0007669"/>
    <property type="project" value="UniProtKB-KW"/>
</dbReference>
<dbReference type="GO" id="GO:0009229">
    <property type="term" value="P:thiamine diphosphate biosynthetic process"/>
    <property type="evidence" value="ECO:0007669"/>
    <property type="project" value="UniProtKB-UniRule"/>
</dbReference>
<dbReference type="GO" id="GO:0052837">
    <property type="term" value="P:thiazole biosynthetic process"/>
    <property type="evidence" value="ECO:0007669"/>
    <property type="project" value="TreeGrafter"/>
</dbReference>
<dbReference type="GO" id="GO:0002937">
    <property type="term" value="P:tRNA 4-thiouridine biosynthesis"/>
    <property type="evidence" value="ECO:0007669"/>
    <property type="project" value="TreeGrafter"/>
</dbReference>
<dbReference type="CDD" id="cd01712">
    <property type="entry name" value="PPase_ThiI"/>
    <property type="match status" value="1"/>
</dbReference>
<dbReference type="CDD" id="cd11716">
    <property type="entry name" value="THUMP_ThiI"/>
    <property type="match status" value="1"/>
</dbReference>
<dbReference type="FunFam" id="3.40.50.620:FF:000053">
    <property type="entry name" value="Probable tRNA sulfurtransferase"/>
    <property type="match status" value="1"/>
</dbReference>
<dbReference type="Gene3D" id="3.30.2130.30">
    <property type="match status" value="1"/>
</dbReference>
<dbReference type="Gene3D" id="3.40.50.620">
    <property type="entry name" value="HUPs"/>
    <property type="match status" value="1"/>
</dbReference>
<dbReference type="HAMAP" id="MF_00021">
    <property type="entry name" value="ThiI"/>
    <property type="match status" value="1"/>
</dbReference>
<dbReference type="InterPro" id="IPR014729">
    <property type="entry name" value="Rossmann-like_a/b/a_fold"/>
</dbReference>
<dbReference type="InterPro" id="IPR020536">
    <property type="entry name" value="ThiI_AANH"/>
</dbReference>
<dbReference type="InterPro" id="IPR054173">
    <property type="entry name" value="ThiI_fer"/>
</dbReference>
<dbReference type="InterPro" id="IPR049961">
    <property type="entry name" value="ThiI_N"/>
</dbReference>
<dbReference type="InterPro" id="IPR004114">
    <property type="entry name" value="THUMP_dom"/>
</dbReference>
<dbReference type="InterPro" id="IPR049962">
    <property type="entry name" value="THUMP_ThiI"/>
</dbReference>
<dbReference type="InterPro" id="IPR003720">
    <property type="entry name" value="tRNA_STrfase"/>
</dbReference>
<dbReference type="InterPro" id="IPR050102">
    <property type="entry name" value="tRNA_sulfurtransferase_ThiI"/>
</dbReference>
<dbReference type="NCBIfam" id="TIGR00342">
    <property type="entry name" value="tRNA uracil 4-sulfurtransferase ThiI"/>
    <property type="match status" value="1"/>
</dbReference>
<dbReference type="PANTHER" id="PTHR43209">
    <property type="entry name" value="TRNA SULFURTRANSFERASE"/>
    <property type="match status" value="1"/>
</dbReference>
<dbReference type="PANTHER" id="PTHR43209:SF1">
    <property type="entry name" value="TRNA SULFURTRANSFERASE"/>
    <property type="match status" value="1"/>
</dbReference>
<dbReference type="Pfam" id="PF02568">
    <property type="entry name" value="ThiI"/>
    <property type="match status" value="1"/>
</dbReference>
<dbReference type="Pfam" id="PF22025">
    <property type="entry name" value="ThiI_fer"/>
    <property type="match status" value="1"/>
</dbReference>
<dbReference type="Pfam" id="PF02926">
    <property type="entry name" value="THUMP"/>
    <property type="match status" value="1"/>
</dbReference>
<dbReference type="SMART" id="SM00981">
    <property type="entry name" value="THUMP"/>
    <property type="match status" value="1"/>
</dbReference>
<dbReference type="SUPFAM" id="SSF52402">
    <property type="entry name" value="Adenine nucleotide alpha hydrolases-like"/>
    <property type="match status" value="1"/>
</dbReference>
<dbReference type="SUPFAM" id="SSF143437">
    <property type="entry name" value="THUMP domain-like"/>
    <property type="match status" value="1"/>
</dbReference>
<dbReference type="PROSITE" id="PS51165">
    <property type="entry name" value="THUMP"/>
    <property type="match status" value="1"/>
</dbReference>
<protein>
    <recommendedName>
        <fullName evidence="1">Probable tRNA sulfurtransferase</fullName>
        <ecNumber evidence="1">2.8.1.4</ecNumber>
    </recommendedName>
    <alternativeName>
        <fullName evidence="1">Sulfur carrier protein ThiS sulfurtransferase</fullName>
    </alternativeName>
    <alternativeName>
        <fullName evidence="1">Thiamine biosynthesis protein ThiI</fullName>
    </alternativeName>
    <alternativeName>
        <fullName evidence="1">tRNA 4-thiouridine synthase</fullName>
    </alternativeName>
</protein>
<feature type="chain" id="PRO_1000196929" description="Probable tRNA sulfurtransferase">
    <location>
        <begin position="1"/>
        <end position="402"/>
    </location>
</feature>
<feature type="domain" description="THUMP" evidence="1">
    <location>
        <begin position="61"/>
        <end position="166"/>
    </location>
</feature>
<feature type="binding site" evidence="1">
    <location>
        <begin position="184"/>
        <end position="185"/>
    </location>
    <ligand>
        <name>ATP</name>
        <dbReference type="ChEBI" id="CHEBI:30616"/>
    </ligand>
</feature>
<feature type="binding site" evidence="1">
    <location>
        <begin position="209"/>
        <end position="210"/>
    </location>
    <ligand>
        <name>ATP</name>
        <dbReference type="ChEBI" id="CHEBI:30616"/>
    </ligand>
</feature>
<feature type="binding site" evidence="1">
    <location>
        <position position="266"/>
    </location>
    <ligand>
        <name>ATP</name>
        <dbReference type="ChEBI" id="CHEBI:30616"/>
    </ligand>
</feature>
<feature type="binding site" evidence="1">
    <location>
        <position position="288"/>
    </location>
    <ligand>
        <name>ATP</name>
        <dbReference type="ChEBI" id="CHEBI:30616"/>
    </ligand>
</feature>
<feature type="binding site" evidence="1">
    <location>
        <position position="297"/>
    </location>
    <ligand>
        <name>ATP</name>
        <dbReference type="ChEBI" id="CHEBI:30616"/>
    </ligand>
</feature>
<reference key="1">
    <citation type="journal article" date="2009" name="J. Bacteriol.">
        <title>Complete genome sequence of Macrococcus caseolyticus strain JCSCS5402, reflecting the ancestral genome of the human-pathogenic staphylococci.</title>
        <authorList>
            <person name="Baba T."/>
            <person name="Kuwahara-Arai K."/>
            <person name="Uchiyama I."/>
            <person name="Takeuchi F."/>
            <person name="Ito T."/>
            <person name="Hiramatsu K."/>
        </authorList>
    </citation>
    <scope>NUCLEOTIDE SEQUENCE [LARGE SCALE GENOMIC DNA]</scope>
    <source>
        <strain>JCSC5402</strain>
    </source>
</reference>
<evidence type="ECO:0000255" key="1">
    <source>
        <dbReference type="HAMAP-Rule" id="MF_00021"/>
    </source>
</evidence>
<sequence length="402" mass="44731">MQYDHILVRYGELTLKSGNRNTFINQLKSNIKYALIPLTGYKVNANRDRMYVEITEDADAEEIMKRISKVFGVHSVSPVVKVEKNIDQIKSSAVKLARDIDAPGVTFKVDAKRSDKGFPYDTFALQQELGGEILSNIEHLTVDVKNPDYKLLVEIRSDAAYLYSRVIKGAGGLPVGTGGKTLLMLSGGIDSPVAGIEVMKRGVTIEAIHFHSPPFTSEEAKQKVIDLTRIMAETTGEIKLHLVPFTDIQKMIHKKVPENLTMTSTRRMMLKIADRFARQIDAKALVNGENLGQVASQTLGSMYAINAVTNLPILRPLLTLDKDEIIIKAKEIGTFDTSIQPFEDCCTIFTPKNPKTNPRLDKVESFEAGTDFDAMIEEAVANIETLTISKHTNTKKEFEDLL</sequence>